<keyword id="KW-0998">Cell outer membrane</keyword>
<keyword id="KW-0903">Direct protein sequencing</keyword>
<keyword id="KW-0406">Ion transport</keyword>
<keyword id="KW-0472">Membrane</keyword>
<keyword id="KW-0625">Polysaccharide transport</keyword>
<keyword id="KW-0626">Porin</keyword>
<keyword id="KW-0732">Signal</keyword>
<keyword id="KW-0762">Sugar transport</keyword>
<keyword id="KW-0812">Transmembrane</keyword>
<keyword id="KW-1134">Transmembrane beta strand</keyword>
<keyword id="KW-0813">Transport</keyword>
<gene>
    <name type="primary">chiP</name>
</gene>
<sequence length="366" mass="39310">MDKMFKRTVIGAAVALASTGLMAKEVGVNSDFNVDVYGVAAMSVVNYNTTDNRDDSSGYVLENESRIGFRAHKEMFENFTVTMQIESGYVDSTDWGHGGVSGGVLGFRDTYIGASGDWGNVRVGRVLTPLYEIVDWPFSNPGLGAAFDWGGINAHYDRQSNQIRYDSPKFGGFSFAASVGRDDNDNGGGAATRDANFFGANARYSFEKITLLGAVESGTRVVAETGGDWELDNTGTAVQNPVVAGYDDDTFAYLVGFEASLPAGFGLAAAFKGEELDNGIRKHKQDSFSIVGQYWNGPLGIKIGYAANLDSKIDGVKQDDANNILSGQVMGVINGFVPYVRVAARSDFTSDKDTDIVTRVGLEYGF</sequence>
<protein>
    <recommendedName>
        <fullName>Chitoporin</fullName>
    </recommendedName>
</protein>
<organism>
    <name type="scientific">Vibrio furnissii</name>
    <dbReference type="NCBI Taxonomy" id="29494"/>
    <lineage>
        <taxon>Bacteria</taxon>
        <taxon>Pseudomonadati</taxon>
        <taxon>Pseudomonadota</taxon>
        <taxon>Gammaproteobacteria</taxon>
        <taxon>Vibrionales</taxon>
        <taxon>Vibrionaceae</taxon>
        <taxon>Vibrio</taxon>
    </lineage>
</organism>
<feature type="signal peptide" evidence="1">
    <location>
        <begin position="1"/>
        <end position="23"/>
    </location>
</feature>
<feature type="chain" id="PRO_0000417604" description="Chitoporin">
    <location>
        <begin position="24"/>
        <end position="366"/>
    </location>
</feature>
<accession>Q9KK91</accession>
<proteinExistence type="evidence at protein level"/>
<evidence type="ECO:0000269" key="1">
    <source>
    </source>
</evidence>
<evidence type="ECO:0000305" key="2"/>
<reference key="1">
    <citation type="journal article" date="2000" name="J. Biol. Chem.">
        <title>Chitin catabolism in the marine bacterium Vibrio furnissii. Identification and molecular cloning of a chitoporin.</title>
        <authorList>
            <person name="Keyhani N.O."/>
            <person name="Li X.B."/>
            <person name="Roseman S."/>
        </authorList>
    </citation>
    <scope>NUCLEOTIDE SEQUENCE [GENOMIC DNA]</scope>
    <scope>PROTEIN SEQUENCE OF 24-55</scope>
    <scope>FUNCTION</scope>
    <scope>SUBCELLULAR LOCATION</scope>
    <scope>INDUCTION</scope>
    <scope>GENE NAME</scope>
    <source>
        <strain>SR1514</strain>
    </source>
</reference>
<dbReference type="EMBL" id="AF129934">
    <property type="protein sequence ID" value="AAF97616.1"/>
    <property type="molecule type" value="Genomic_DNA"/>
</dbReference>
<dbReference type="RefSeq" id="WP_004726690.1">
    <property type="nucleotide sequence ID" value="NZ_UHIT01000001.1"/>
</dbReference>
<dbReference type="SMR" id="Q9KK91"/>
<dbReference type="TCDB" id="1.B.1.7.1">
    <property type="family name" value="the general bacterial porin (gbp) family"/>
</dbReference>
<dbReference type="GeneID" id="50534892"/>
<dbReference type="OMA" id="YELVDWP"/>
<dbReference type="BioCyc" id="MetaCyc:MONOMER-20046"/>
<dbReference type="GO" id="GO:0009279">
    <property type="term" value="C:cell outer membrane"/>
    <property type="evidence" value="ECO:0007669"/>
    <property type="project" value="UniProtKB-SubCell"/>
</dbReference>
<dbReference type="GO" id="GO:0046930">
    <property type="term" value="C:pore complex"/>
    <property type="evidence" value="ECO:0007669"/>
    <property type="project" value="UniProtKB-KW"/>
</dbReference>
<dbReference type="GO" id="GO:0015288">
    <property type="term" value="F:porin activity"/>
    <property type="evidence" value="ECO:0007669"/>
    <property type="project" value="UniProtKB-KW"/>
</dbReference>
<dbReference type="GO" id="GO:0034220">
    <property type="term" value="P:monoatomic ion transmembrane transport"/>
    <property type="evidence" value="ECO:0007669"/>
    <property type="project" value="InterPro"/>
</dbReference>
<dbReference type="GO" id="GO:0015774">
    <property type="term" value="P:polysaccharide transport"/>
    <property type="evidence" value="ECO:0007669"/>
    <property type="project" value="UniProtKB-KW"/>
</dbReference>
<dbReference type="CDD" id="cd00342">
    <property type="entry name" value="gram_neg_porins"/>
    <property type="match status" value="1"/>
</dbReference>
<dbReference type="Gene3D" id="2.40.160.10">
    <property type="entry name" value="Porin"/>
    <property type="match status" value="1"/>
</dbReference>
<dbReference type="InterPro" id="IPR050298">
    <property type="entry name" value="Gram-neg_bact_OMP"/>
</dbReference>
<dbReference type="InterPro" id="IPR033900">
    <property type="entry name" value="Gram_neg_porin_domain"/>
</dbReference>
<dbReference type="InterPro" id="IPR023614">
    <property type="entry name" value="Porin_dom_sf"/>
</dbReference>
<dbReference type="InterPro" id="IPR001702">
    <property type="entry name" value="Porin_Gram-ve"/>
</dbReference>
<dbReference type="InterPro" id="IPR002299">
    <property type="entry name" value="Porin_Neis"/>
</dbReference>
<dbReference type="PANTHER" id="PTHR34501:SF2">
    <property type="entry name" value="OUTER MEMBRANE PORIN F-RELATED"/>
    <property type="match status" value="1"/>
</dbReference>
<dbReference type="PANTHER" id="PTHR34501">
    <property type="entry name" value="PROTEIN YDDL-RELATED"/>
    <property type="match status" value="1"/>
</dbReference>
<dbReference type="Pfam" id="PF13609">
    <property type="entry name" value="Porin_4"/>
    <property type="match status" value="1"/>
</dbReference>
<dbReference type="PRINTS" id="PR00182">
    <property type="entry name" value="ECOLNEIPORIN"/>
</dbReference>
<dbReference type="PRINTS" id="PR00184">
    <property type="entry name" value="NEISSPPORIN"/>
</dbReference>
<dbReference type="SUPFAM" id="SSF56935">
    <property type="entry name" value="Porins"/>
    <property type="match status" value="1"/>
</dbReference>
<comment type="function">
    <text evidence="1">Involved in the uptake of chitosugars.</text>
</comment>
<comment type="subcellular location">
    <subcellularLocation>
        <location evidence="1">Cell outer membrane</location>
        <topology evidence="1">Multi-pass membrane protein</topology>
    </subcellularLocation>
</comment>
<comment type="induction">
    <text evidence="1">Induced by chitin oligosaccharides but not by N-acetyl-D-glucosamine nor by other sugars.</text>
</comment>
<comment type="similarity">
    <text evidence="2">Belongs to the Gram-negative porin family.</text>
</comment>
<name>CHIP_VIBFU</name>